<organismHost>
    <name type="scientific">Homo sapiens</name>
    <name type="common">Human</name>
    <dbReference type="NCBI Taxonomy" id="9606"/>
</organismHost>
<feature type="chain" id="PRO_0000142869" description="Small hydrophobic protein">
    <location>
        <begin position="1"/>
        <end position="64"/>
    </location>
</feature>
<feature type="topological domain" description="Intravirion" evidence="18">
    <location>
        <begin position="1"/>
        <end position="20"/>
    </location>
</feature>
<feature type="transmembrane region" description="Helical; Signal-anchor for type II membrane protein" evidence="7">
    <location>
        <begin position="21"/>
        <end position="44"/>
    </location>
</feature>
<feature type="topological domain" description="Virion surface" evidence="7">
    <location>
        <begin position="45"/>
        <end position="64"/>
    </location>
</feature>
<feature type="region of interest" description="Interaction with host BCAP31" evidence="10">
    <location>
        <begin position="6"/>
        <end position="15"/>
    </location>
</feature>
<feature type="region of interest" description="Interaction with small-molecule inhibitor" evidence="9">
    <location>
        <begin position="38"/>
        <end position="43"/>
    </location>
</feature>
<feature type="site" description="Involved in opening and closing mechanism of the pentameric structure" evidence="12">
    <location>
        <position position="22"/>
    </location>
</feature>
<feature type="site" description="Involved in opening and closing mechanism of the pentameric structure" evidence="12">
    <location>
        <position position="51"/>
    </location>
</feature>
<feature type="glycosylation site" description="N-linked (GlcNAc...) asparagine; by host" evidence="1">
    <location>
        <position position="52"/>
    </location>
</feature>
<feature type="splice variant" id="VSP_029056" description="In isoform SHt." evidence="17">
    <location>
        <begin position="1"/>
        <end position="22"/>
    </location>
</feature>
<feature type="mutagenesis site" description="Reduces channel activity." evidence="9">
    <original>I</original>
    <variation>F</variation>
    <location>
        <position position="21"/>
    </location>
</feature>
<feature type="mutagenesis site" description="Reduces the effect of small-molecule inhibitor." evidence="9">
    <original>I</original>
    <variation>Y</variation>
    <location>
        <position position="21"/>
    </location>
</feature>
<feature type="mutagenesis site" description="Impairs channel activity; when associated with A-51." evidence="7">
    <original>H</original>
    <variation>A</variation>
    <location>
        <position position="22"/>
    </location>
</feature>
<feature type="mutagenesis site" description="Impairs channel activity; when associated with F-51. Reduces the effect of small-molecule inhibitor." evidence="7 9">
    <original>H</original>
    <variation>F</variation>
    <location>
        <position position="22"/>
    </location>
</feature>
<feature type="mutagenesis site" description="Abolishes the effect of small-molecule inhibitor." evidence="9">
    <original>A</original>
    <variation>S</variation>
    <location>
        <position position="39"/>
    </location>
</feature>
<feature type="mutagenesis site" description="Impairs channel activity; when associated with A-22." evidence="7">
    <original>H</original>
    <variation>A</variation>
    <location>
        <position position="51"/>
    </location>
</feature>
<feature type="mutagenesis site" description="Impairs channel activity; when associated with F-22." evidence="7 9">
    <original>H</original>
    <variation>F</variation>
    <location>
        <position position="51"/>
    </location>
</feature>
<feature type="strand" evidence="20">
    <location>
        <begin position="3"/>
        <end position="5"/>
    </location>
</feature>
<feature type="helix" evidence="20">
    <location>
        <begin position="6"/>
        <end position="13"/>
    </location>
</feature>
<feature type="helix" evidence="21">
    <location>
        <begin position="39"/>
        <end position="49"/>
    </location>
</feature>
<feature type="strand" evidence="21">
    <location>
        <begin position="57"/>
        <end position="59"/>
    </location>
</feature>
<reference key="1">
    <citation type="journal article" date="1985" name="Virology">
        <title>The 1A protein gene of human respiratory syncytial virus: nucleotide sequence of the mRNA and a related polycistronic transcript.</title>
        <authorList>
            <person name="Collins P.L."/>
            <person name="Wertz G.W."/>
        </authorList>
    </citation>
    <scope>NUCLEOTIDE SEQUENCE [GENOMIC RNA]</scope>
</reference>
<reference key="2">
    <citation type="journal article" date="1995" name="Virology">
        <title>A cold-passaged, attenuated strain of human respiratory syncytial virus contains mutations in the F and L genes.</title>
        <authorList>
            <person name="Connors M."/>
            <person name="Crowe J.E. Jr."/>
            <person name="Firestone C.Y."/>
            <person name="Murphy B.R."/>
            <person name="Collins P.L."/>
        </authorList>
    </citation>
    <scope>NUCLEOTIDE SEQUENCE [GENOMIC RNA]</scope>
</reference>
<reference key="3">
    <citation type="journal article" date="1996" name="Virus Genes">
        <title>Acquisition of the ts phenotype by a chemically mutagenized cold-passaged human respiratory syncytial virus vaccine candidate results from the acquisition of a single mutation in the polymerase (L) gene.</title>
        <authorList>
            <person name="Crowe J.E. Jr."/>
            <person name="Firestone C.Y."/>
            <person name="Whitehead S.S."/>
            <person name="Collins P.L."/>
            <person name="Murphy B.R."/>
        </authorList>
    </citation>
    <scope>NUCLEOTIDE SEQUENCE [GENOMIC RNA]</scope>
</reference>
<reference key="4">
    <citation type="journal article" date="1989" name="J. Virol.">
        <title>The 1A protein of respiratory syncytial virus is an integral membrane protein present as multiple, structurally distinct species.</title>
        <authorList>
            <person name="Olmsted R.A."/>
            <person name="Collins P.L."/>
        </authorList>
    </citation>
    <scope>ALTERNATIVE INITIATION</scope>
    <scope>GLYCOSYLATION</scope>
    <scope>SUBCELLULAR LOCATION</scope>
    <source>
        <strain>A2</strain>
    </source>
</reference>
<reference key="5">
    <citation type="journal article" date="2004" name="J. Gen. Virol.">
        <title>The small hydrophobic (SH) protein accumulates within lipid-raft structures of the Golgi complex during respiratory syncytial virus infection.</title>
        <authorList>
            <person name="Rixon H.W."/>
            <person name="Brown G."/>
            <person name="Aitken J."/>
            <person name="McDonald T."/>
            <person name="Graham S."/>
            <person name="Sugrue R.J."/>
        </authorList>
    </citation>
    <scope>FUNCTION</scope>
    <scope>SUBCELLULAR LOCATION</scope>
    <source>
        <strain>A2</strain>
    </source>
</reference>
<reference key="6">
    <citation type="journal article" date="2005" name="J. Gen. Virol.">
        <title>The respiratory syncytial virus small hydrophobic protein is phosphorylated via a mitogen-activated protein kinase p38-dependent tyrosine kinase activity during virus infection.</title>
        <authorList>
            <person name="Rixon H.W."/>
            <person name="Brown G."/>
            <person name="Murray J.T."/>
            <person name="Sugrue R.J."/>
        </authorList>
    </citation>
    <scope>PHOSPHORYLATION</scope>
    <source>
        <strain>A2</strain>
    </source>
</reference>
<reference key="7">
    <citation type="journal article" date="2007" name="J. Virol.">
        <title>Function of the respiratory syncytial virus small hydrophobic protein.</title>
        <authorList>
            <person name="Fuentes S."/>
            <person name="Tran K.C."/>
            <person name="Luthra P."/>
            <person name="Teng M.N."/>
            <person name="He B."/>
        </authorList>
    </citation>
    <scope>FUNCTION</scope>
    <source>
        <strain>A2</strain>
    </source>
</reference>
<reference key="8">
    <citation type="journal article" date="2008" name="Biochem. Biophys. Res. Commun.">
        <title>The RSV F and G glycoproteins interact to form a complex on the surface of infected cells.</title>
        <authorList>
            <person name="Low K.W."/>
            <person name="Tan T."/>
            <person name="Ng K."/>
            <person name="Tan B.H."/>
            <person name="Sugrue R.J."/>
        </authorList>
    </citation>
    <scope>INTERACTION WITH GLYCOPROTEIN G</scope>
    <source>
        <strain>A2</strain>
    </source>
</reference>
<reference key="9">
    <citation type="journal article" date="2008" name="Protein Sci.">
        <title>Structure and ion channel activity of the human respiratory syncytial virus (hRSV) small hydrophobic protein transmembrane domain.</title>
        <authorList>
            <person name="Gan S.W."/>
            <person name="Ng L."/>
            <person name="Lin X."/>
            <person name="Gong X."/>
            <person name="Torres J."/>
        </authorList>
    </citation>
    <scope>FUNCTION</scope>
    <scope>HOMOPENTAMERIZATION</scope>
</reference>
<reference key="10">
    <citation type="journal article" date="2012" name="J. Biol. Chem.">
        <title>The small hydrophobic protein of the human respiratory syncytial virus forms pentameric ion channels.</title>
        <authorList>
            <person name="Gan S.W."/>
            <person name="Tan E."/>
            <person name="Lin X."/>
            <person name="Yu D."/>
            <person name="Wang J."/>
            <person name="Tan G.M."/>
            <person name="Vararattanavech A."/>
            <person name="Yeo C.Y."/>
            <person name="Soon C.H."/>
            <person name="Soong T.W."/>
            <person name="Pervushin K."/>
            <person name="Torres J."/>
        </authorList>
    </citation>
    <scope>FUNCTION</scope>
    <scope>SUBUNIT</scope>
    <scope>ACTIVITY REGULATION</scope>
    <scope>MUTAGENESIS OF HIS-22 AND HIS-51</scope>
    <scope>TOPOLOGY</scope>
    <source>
        <strain>S-2</strain>
    </source>
</reference>
<reference key="11">
    <citation type="journal article" date="2013" name="Thorax">
        <title>Human respiratory syncytial virus viroporin SH: a viral recognition pathway used by the host to signal inflammasome activation.</title>
        <authorList>
            <person name="Triantafilou K."/>
            <person name="Kar S."/>
            <person name="Vakakis E."/>
            <person name="Kotecha S."/>
            <person name="Triantafilou M."/>
        </authorList>
    </citation>
    <scope>FUNCTION</scope>
    <scope>SUBCELLULAR LOCATION</scope>
</reference>
<reference key="12">
    <citation type="journal article" date="2015" name="Virology">
        <title>Interaction between human BAP31 and respiratory syncytial virus small hydrophobic (SH) protein.</title>
        <authorList>
            <person name="Li Y."/>
            <person name="Jain N."/>
            <person name="Limpanawat S."/>
            <person name="To J."/>
            <person name="Quistgaard E.M."/>
            <person name="Nordlund P."/>
            <person name="Thanabalu T."/>
            <person name="Torres J."/>
        </authorList>
    </citation>
    <scope>SUBCELLULAR LOCATION</scope>
    <scope>INTERACTION WITH BCAP31</scope>
    <scope>REGION</scope>
    <source>
        <strain>S-2</strain>
    </source>
</reference>
<reference key="13">
    <citation type="journal article" date="2016" name="J. Mol. Model.">
        <title>Structure and functional dynamics characterization of the ion channel of the human respiratory syncytial virus (hRSV) small hydrophobic protein (SH) transmembrane domain by combining molecular dynamics with excited normal modes.</title>
        <authorList>
            <person name="Araujo G.C."/>
            <person name="Silva R.H."/>
            <person name="Scott L.P."/>
            <person name="Araujo A.S."/>
            <person name="Souza F.P."/>
            <person name="de Oliveira R.J."/>
        </authorList>
    </citation>
    <scope>FUNCTION</scope>
</reference>
<reference key="14">
    <citation type="journal article" date="2014" name="J. Virol.">
        <title>Inhibition of the human respiratory syncytial virus small hydrophobic protein and structural variations in a bicelle environment.</title>
        <authorList>
            <person name="Li Y."/>
            <person name="To J."/>
            <person name="Verdia-Baguena C."/>
            <person name="Dossena S."/>
            <person name="Surya W."/>
            <person name="Huang M."/>
            <person name="Paulmichl M."/>
            <person name="Liu D.X."/>
            <person name="Aguilella V.M."/>
            <person name="Torres J."/>
        </authorList>
    </citation>
    <scope>STRUCTURE BY NMR OF 38-64</scope>
    <scope>FUNCTION</scope>
    <scope>MUTAGENESIS OF ILE-21; HIS-22; ALA-39 AND HIS-51</scope>
    <scope>ACTIVITY REGULATION</scope>
    <scope>REGION</scope>
    <source>
        <strain>S-2</strain>
    </source>
</reference>
<keyword id="KW-0002">3D-structure</keyword>
<keyword id="KW-1073">Activation of host caspases by virus</keyword>
<keyword id="KW-0024">Alternative initiation</keyword>
<keyword id="KW-0325">Glycoprotein</keyword>
<keyword id="KW-1032">Host cell membrane</keyword>
<keyword id="KW-1038">Host endoplasmic reticulum</keyword>
<keyword id="KW-1040">Host Golgi apparatus</keyword>
<keyword id="KW-1043">Host membrane</keyword>
<keyword id="KW-0945">Host-virus interaction</keyword>
<keyword id="KW-0407">Ion channel</keyword>
<keyword id="KW-0406">Ion transport</keyword>
<keyword id="KW-0472">Membrane</keyword>
<keyword id="KW-1119">Modulation of host cell apoptosis by virus</keyword>
<keyword id="KW-0597">Phosphoprotein</keyword>
<keyword id="KW-0735">Signal-anchor</keyword>
<keyword id="KW-0812">Transmembrane</keyword>
<keyword id="KW-1133">Transmembrane helix</keyword>
<keyword id="KW-0813">Transport</keyword>
<keyword id="KW-1182">Viral ion channel</keyword>
<keyword id="KW-0946">Virion</keyword>
<dbReference type="EMBL" id="M11486">
    <property type="protein sequence ID" value="AAB59856.1"/>
    <property type="molecule type" value="Genomic_RNA"/>
</dbReference>
<dbReference type="EMBL" id="U50362">
    <property type="protein sequence ID" value="AAB86662.1"/>
    <property type="molecule type" value="Genomic_RNA"/>
</dbReference>
<dbReference type="EMBL" id="U50363">
    <property type="protein sequence ID" value="AAB86674.1"/>
    <property type="molecule type" value="Genomic_RNA"/>
</dbReference>
<dbReference type="EMBL" id="U63644">
    <property type="protein sequence ID" value="AAC55968.1"/>
    <property type="molecule type" value="Genomic_RNA"/>
</dbReference>
<dbReference type="PIR" id="A04031">
    <property type="entry name" value="P1NZAR"/>
</dbReference>
<dbReference type="PDB" id="2NB7">
    <property type="method" value="NMR"/>
    <property type="chains" value="A=1-14"/>
</dbReference>
<dbReference type="PDB" id="2NB8">
    <property type="method" value="NMR"/>
    <property type="chains" value="A=38-64"/>
</dbReference>
<dbReference type="PDBsum" id="2NB7"/>
<dbReference type="PDBsum" id="2NB8"/>
<dbReference type="SMR" id="P0DOE5"/>
<dbReference type="MINT" id="P0DOE5"/>
<dbReference type="GlyCosmos" id="P0DOE5">
    <property type="glycosylation" value="1 site, No reported glycans"/>
</dbReference>
<dbReference type="Reactome" id="R-HSA-9820960">
    <molecule id="P0DOE5-1"/>
    <property type="pathway name" value="Respiratory syncytial virus (RSV) attachment and entry"/>
</dbReference>
<dbReference type="Reactome" id="R-HSA-9820962">
    <molecule id="P0DOE5-1"/>
    <property type="pathway name" value="Assembly and release of respiratory syncytial virus (RSV) virions"/>
</dbReference>
<dbReference type="Reactome" id="R-HSA-9828721">
    <property type="pathway name" value="Translation of respiratory syncytial virus mRNAs"/>
</dbReference>
<dbReference type="Reactome" id="R-HSA-9828806">
    <molecule id="P0DOE5-1"/>
    <property type="pathway name" value="Maturation of hRSV A proteins"/>
</dbReference>
<dbReference type="Reactome" id="R-HSA-9833110">
    <molecule id="P0DOE5-1"/>
    <property type="pathway name" value="RSV-host interactions"/>
</dbReference>
<dbReference type="EvolutionaryTrace" id="P0DOE5"/>
<dbReference type="Proteomes" id="UP000007678">
    <property type="component" value="Genome"/>
</dbReference>
<dbReference type="Proteomes" id="UP000134464">
    <property type="component" value="Genome"/>
</dbReference>
<dbReference type="Proteomes" id="UP000181145">
    <property type="component" value="Genome"/>
</dbReference>
<dbReference type="Proteomes" id="UP000181262">
    <property type="component" value="Genome"/>
</dbReference>
<dbReference type="GO" id="GO:0044167">
    <property type="term" value="C:host cell endoplasmic reticulum membrane"/>
    <property type="evidence" value="ECO:0000314"/>
    <property type="project" value="UniProtKB"/>
</dbReference>
<dbReference type="GO" id="GO:0044178">
    <property type="term" value="C:host cell Golgi membrane"/>
    <property type="evidence" value="ECO:0000314"/>
    <property type="project" value="UniProtKB"/>
</dbReference>
<dbReference type="GO" id="GO:0020002">
    <property type="term" value="C:host cell plasma membrane"/>
    <property type="evidence" value="ECO:0000314"/>
    <property type="project" value="UniProtKB"/>
</dbReference>
<dbReference type="GO" id="GO:0005886">
    <property type="term" value="C:plasma membrane"/>
    <property type="evidence" value="ECO:0000304"/>
    <property type="project" value="Reactome"/>
</dbReference>
<dbReference type="GO" id="GO:0055036">
    <property type="term" value="C:virion membrane"/>
    <property type="evidence" value="ECO:0000304"/>
    <property type="project" value="Reactome"/>
</dbReference>
<dbReference type="GO" id="GO:0042802">
    <property type="term" value="F:identical protein binding"/>
    <property type="evidence" value="ECO:0000353"/>
    <property type="project" value="IntAct"/>
</dbReference>
<dbReference type="GO" id="GO:0005261">
    <property type="term" value="F:monoatomic cation channel activity"/>
    <property type="evidence" value="ECO:0000314"/>
    <property type="project" value="UniProtKB"/>
</dbReference>
<dbReference type="GO" id="GO:0052151">
    <property type="term" value="P:symbiont-mediated activation of host apoptosis"/>
    <property type="evidence" value="ECO:0007669"/>
    <property type="project" value="UniProtKB-KW"/>
</dbReference>
<dbReference type="GO" id="GO:0033668">
    <property type="term" value="P:symbiont-mediated suppression of host apoptosis"/>
    <property type="evidence" value="ECO:0000315"/>
    <property type="project" value="UniProtKB"/>
</dbReference>
<dbReference type="InterPro" id="IPR005327">
    <property type="entry name" value="SHP"/>
</dbReference>
<dbReference type="Pfam" id="PF03579">
    <property type="entry name" value="SHP"/>
    <property type="match status" value="1"/>
</dbReference>
<proteinExistence type="evidence at protein level"/>
<gene>
    <name evidence="13 14" type="primary">SH</name>
    <name evidence="15 16" type="synonym">1A</name>
</gene>
<name>SH_HRSVA</name>
<sequence length="64" mass="7536">MENTSITIEFSSKFWPYFTLIHMITTIISLLIIISIMIAILNKLCEYNVFHNKTFELPRARVNT</sequence>
<evidence type="ECO:0000255" key="1"/>
<evidence type="ECO:0000269" key="2">
    <source>
    </source>
</evidence>
<evidence type="ECO:0000269" key="3">
    <source>
    </source>
</evidence>
<evidence type="ECO:0000269" key="4">
    <source>
    </source>
</evidence>
<evidence type="ECO:0000269" key="5">
    <source>
    </source>
</evidence>
<evidence type="ECO:0000269" key="6">
    <source>
    </source>
</evidence>
<evidence type="ECO:0000269" key="7">
    <source>
    </source>
</evidence>
<evidence type="ECO:0000269" key="8">
    <source>
    </source>
</evidence>
<evidence type="ECO:0000269" key="9">
    <source>
    </source>
</evidence>
<evidence type="ECO:0000269" key="10">
    <source>
    </source>
</evidence>
<evidence type="ECO:0000269" key="11">
    <source>
    </source>
</evidence>
<evidence type="ECO:0000269" key="12">
    <source>
    </source>
</evidence>
<evidence type="ECO:0000303" key="13">
    <source>
    </source>
</evidence>
<evidence type="ECO:0000303" key="14">
    <source>
    </source>
</evidence>
<evidence type="ECO:0000303" key="15">
    <source>
    </source>
</evidence>
<evidence type="ECO:0000303" key="16">
    <source>
    </source>
</evidence>
<evidence type="ECO:0000305" key="17"/>
<evidence type="ECO:0000305" key="18">
    <source>
    </source>
</evidence>
<evidence type="ECO:0000305" key="19">
    <source>
    </source>
</evidence>
<evidence type="ECO:0007829" key="20">
    <source>
        <dbReference type="PDB" id="2NB7"/>
    </source>
</evidence>
<evidence type="ECO:0007829" key="21">
    <source>
        <dbReference type="PDB" id="2NB8"/>
    </source>
</evidence>
<comment type="function">
    <text evidence="2 4 6 7 8 9 12">Viroporin that forms a homopentameric ion channel displaying low ion selectivity (PubMed:18369195, PubMed:22621926, PubMed:25100835, PubMed:27817112). May play a role in virus morphogenesis and pathogenicity at various stages of the viral life cycle. Accumulates at the membrane of the Golgi apparatus in infected cells and may facilitate virus release by modifying the secretory pathway (PubMed:15105532, PubMed:23229815). May enhance host membrane permeability and disrupt cellular ion homeostasis, which can be sensed as damage-associated molecular patterns/danger signals, triggering NLRP3 inflammasome activation and inflammatory immune response (PubMed:23229815). Also inhibits host TNFA-mediated signaling pathway and may delay apoptosis, allowing time for the virus to replicate (PubMed:17494063).</text>
</comment>
<comment type="activity regulation">
    <text evidence="7 9">Channel activity is inhibited by copper (PubMed:22621926). Also inhibited by small-molecule pyronin B (PubMed:25100835).</text>
</comment>
<comment type="subunit">
    <text evidence="5 6 7 10">Homopentamer forming a funnel-like pore (PubMed:18036342, PubMed:18369195, PubMed:22621926). Interacts with glycoprotein G; this interaction occurs on the surface of virion particles and infected cells (PubMed:18036342). Interacts with host BCAP31 (via C-terminus); this interaction is direct (PubMed:25854864).</text>
</comment>
<comment type="interaction">
    <interactant intactId="EBI-7973466">
        <id>P0DOE5</id>
    </interactant>
    <interactant intactId="EBI-7973466">
        <id>P0DOE5</id>
        <label>SH</label>
    </interactant>
    <organismsDiffer>false</organismsDiffer>
    <experiments>4</experiments>
</comment>
<comment type="subcellular location">
    <subcellularLocation>
        <location evidence="19">Virion membrane</location>
        <topology evidence="17">Single-pass type II membrane protein</topology>
    </subcellularLocation>
    <subcellularLocation>
        <location evidence="11">Host cell membrane</location>
        <topology evidence="17">Single-pass type II membrane protein</topology>
    </subcellularLocation>
    <subcellularLocation>
        <location evidence="2 8">Host Golgi apparatus membrane</location>
        <topology>Single-pass type II membrane protein</topology>
    </subcellularLocation>
    <subcellularLocation>
        <location evidence="2 10">Host endoplasmic reticulum membrane</location>
        <topology>Single-pass type II membrane protein</topology>
    </subcellularLocation>
    <text evidence="2">Present in very small amount in the virion. Detected in lipid rafts of host Golgi apparatus membrane.</text>
</comment>
<comment type="alternative products">
    <event type="alternative initiation"/>
    <isoform>
        <id>P0DOE5-1</id>
        <name evidence="11">SH</name>
        <sequence type="displayed"/>
    </isoform>
    <isoform>
        <id>P0DOE5-2</id>
        <name evidence="11">SHt</name>
        <sequence type="described" ref="VSP_029056"/>
    </isoform>
</comment>
<comment type="PTM">
    <text evidence="11">Four species of SH have been detected in infected cell cytoplasm: a 7.5 kDa non-glycosylated form (SH0), a 13-15 kDa form that contains one or two N-linked carbohydrate side chains of the high-mannose type (SHg), a 21-30 kDa polylactosaminoglycan-modified form of the protein (SHp), and the isoform generated by alternative translational initiation (PubMed:2649692). Of these different forms, SH0 is by far the most abundant protein detected during virus infection (PubMed:2649692).</text>
</comment>
<comment type="PTM">
    <text evidence="3">Tyrosine phosphorylated.</text>
</comment>
<comment type="miscellaneous">
    <molecule>Isoform SHt</molecule>
    <text evidence="11">Produced by alternative initiation at Met-23 of isoform SH and gives rise to a 4.6 kDa truncated form of the non-glycosylated protein.</text>
</comment>
<comment type="similarity">
    <text evidence="17">Belongs to the orthopneumovirus small hydrophobic protein family.</text>
</comment>
<accession>P0DOE5</accession>
<accession>P04852</accession>
<organism>
    <name type="scientific">Human respiratory syncytial virus A (strain A2)</name>
    <dbReference type="NCBI Taxonomy" id="11259"/>
    <lineage>
        <taxon>Viruses</taxon>
        <taxon>Riboviria</taxon>
        <taxon>Orthornavirae</taxon>
        <taxon>Negarnaviricota</taxon>
        <taxon>Haploviricotina</taxon>
        <taxon>Monjiviricetes</taxon>
        <taxon>Mononegavirales</taxon>
        <taxon>Pneumoviridae</taxon>
        <taxon>Orthopneumovirus</taxon>
        <taxon>Orthopneumovirus hominis</taxon>
    </lineage>
</organism>
<protein>
    <recommendedName>
        <fullName evidence="13 14">Small hydrophobic protein</fullName>
    </recommendedName>
    <alternativeName>
        <fullName>Small protein 1A</fullName>
    </alternativeName>
</protein>